<organism>
    <name type="scientific">Myxococcus xanthus (strain DK1622)</name>
    <dbReference type="NCBI Taxonomy" id="246197"/>
    <lineage>
        <taxon>Bacteria</taxon>
        <taxon>Pseudomonadati</taxon>
        <taxon>Myxococcota</taxon>
        <taxon>Myxococcia</taxon>
        <taxon>Myxococcales</taxon>
        <taxon>Cystobacterineae</taxon>
        <taxon>Myxococcaceae</taxon>
        <taxon>Myxococcus</taxon>
    </lineage>
</organism>
<sequence length="173" mass="18700">MLKSEKEEMIKELHEKFSRTTSAVVAEFTKVDVETVTKLRKKFREGNVEYKVIKNTLARRAAQGTSVSVIADDFTGPVALCISYGDVVAPAKILVEFAKDIEDKIKIRTAVVEGRKVDVAGVKALAKLPGLPELRAQLLGVISEPASKLVRTIAAPGSQLARVVQANADKAQG</sequence>
<feature type="chain" id="PRO_1000005542" description="Large ribosomal subunit protein uL10">
    <location>
        <begin position="1"/>
        <end position="173"/>
    </location>
</feature>
<reference key="1">
    <citation type="journal article" date="2006" name="Proc. Natl. Acad. Sci. U.S.A.">
        <title>Evolution of sensory complexity recorded in a myxobacterial genome.</title>
        <authorList>
            <person name="Goldman B.S."/>
            <person name="Nierman W.C."/>
            <person name="Kaiser D."/>
            <person name="Slater S.C."/>
            <person name="Durkin A.S."/>
            <person name="Eisen J.A."/>
            <person name="Ronning C.M."/>
            <person name="Barbazuk W.B."/>
            <person name="Blanchard M."/>
            <person name="Field C."/>
            <person name="Halling C."/>
            <person name="Hinkle G."/>
            <person name="Iartchuk O."/>
            <person name="Kim H.S."/>
            <person name="Mackenzie C."/>
            <person name="Madupu R."/>
            <person name="Miller N."/>
            <person name="Shvartsbeyn A."/>
            <person name="Sullivan S.A."/>
            <person name="Vaudin M."/>
            <person name="Wiegand R."/>
            <person name="Kaplan H.B."/>
        </authorList>
    </citation>
    <scope>NUCLEOTIDE SEQUENCE [LARGE SCALE GENOMIC DNA]</scope>
    <source>
        <strain>DK1622</strain>
    </source>
</reference>
<keyword id="KW-1185">Reference proteome</keyword>
<keyword id="KW-0687">Ribonucleoprotein</keyword>
<keyword id="KW-0689">Ribosomal protein</keyword>
<keyword id="KW-0694">RNA-binding</keyword>
<keyword id="KW-0699">rRNA-binding</keyword>
<gene>
    <name evidence="1" type="primary">rplJ</name>
    <name type="ordered locus">MXAN_3075</name>
</gene>
<dbReference type="EMBL" id="CP000113">
    <property type="protein sequence ID" value="ABF91324.1"/>
    <property type="molecule type" value="Genomic_DNA"/>
</dbReference>
<dbReference type="RefSeq" id="WP_011553125.1">
    <property type="nucleotide sequence ID" value="NC_008095.1"/>
</dbReference>
<dbReference type="SMR" id="Q1D7U5"/>
<dbReference type="STRING" id="246197.MXAN_3075"/>
<dbReference type="EnsemblBacteria" id="ABF91324">
    <property type="protein sequence ID" value="ABF91324"/>
    <property type="gene ID" value="MXAN_3075"/>
</dbReference>
<dbReference type="GeneID" id="41360437"/>
<dbReference type="KEGG" id="mxa:MXAN_3075"/>
<dbReference type="eggNOG" id="COG0244">
    <property type="taxonomic scope" value="Bacteria"/>
</dbReference>
<dbReference type="HOGENOM" id="CLU_092227_2_1_7"/>
<dbReference type="OrthoDB" id="3186107at2"/>
<dbReference type="Proteomes" id="UP000002402">
    <property type="component" value="Chromosome"/>
</dbReference>
<dbReference type="GO" id="GO:1990904">
    <property type="term" value="C:ribonucleoprotein complex"/>
    <property type="evidence" value="ECO:0007669"/>
    <property type="project" value="UniProtKB-KW"/>
</dbReference>
<dbReference type="GO" id="GO:0005840">
    <property type="term" value="C:ribosome"/>
    <property type="evidence" value="ECO:0007669"/>
    <property type="project" value="UniProtKB-KW"/>
</dbReference>
<dbReference type="GO" id="GO:0070180">
    <property type="term" value="F:large ribosomal subunit rRNA binding"/>
    <property type="evidence" value="ECO:0007669"/>
    <property type="project" value="UniProtKB-UniRule"/>
</dbReference>
<dbReference type="GO" id="GO:0006412">
    <property type="term" value="P:translation"/>
    <property type="evidence" value="ECO:0007669"/>
    <property type="project" value="UniProtKB-UniRule"/>
</dbReference>
<dbReference type="CDD" id="cd05797">
    <property type="entry name" value="Ribosomal_L10"/>
    <property type="match status" value="1"/>
</dbReference>
<dbReference type="Gene3D" id="3.30.70.1730">
    <property type="match status" value="1"/>
</dbReference>
<dbReference type="Gene3D" id="6.10.250.290">
    <property type="match status" value="1"/>
</dbReference>
<dbReference type="HAMAP" id="MF_00362">
    <property type="entry name" value="Ribosomal_uL10"/>
    <property type="match status" value="1"/>
</dbReference>
<dbReference type="InterPro" id="IPR001790">
    <property type="entry name" value="Ribosomal_uL10"/>
</dbReference>
<dbReference type="InterPro" id="IPR043141">
    <property type="entry name" value="Ribosomal_uL10-like_sf"/>
</dbReference>
<dbReference type="InterPro" id="IPR022973">
    <property type="entry name" value="Ribosomal_uL10_bac"/>
</dbReference>
<dbReference type="InterPro" id="IPR047865">
    <property type="entry name" value="Ribosomal_uL10_bac_type"/>
</dbReference>
<dbReference type="NCBIfam" id="NF000955">
    <property type="entry name" value="PRK00099.1-1"/>
    <property type="match status" value="1"/>
</dbReference>
<dbReference type="PANTHER" id="PTHR11560">
    <property type="entry name" value="39S RIBOSOMAL PROTEIN L10, MITOCHONDRIAL"/>
    <property type="match status" value="1"/>
</dbReference>
<dbReference type="Pfam" id="PF00466">
    <property type="entry name" value="Ribosomal_L10"/>
    <property type="match status" value="1"/>
</dbReference>
<dbReference type="SUPFAM" id="SSF160369">
    <property type="entry name" value="Ribosomal protein L10-like"/>
    <property type="match status" value="1"/>
</dbReference>
<comment type="function">
    <text evidence="1">Forms part of the ribosomal stalk, playing a central role in the interaction of the ribosome with GTP-bound translation factors.</text>
</comment>
<comment type="subunit">
    <text evidence="1">Part of the ribosomal stalk of the 50S ribosomal subunit. The N-terminus interacts with L11 and the large rRNA to form the base of the stalk. The C-terminus forms an elongated spine to which L12 dimers bind in a sequential fashion forming a multimeric L10(L12)X complex.</text>
</comment>
<comment type="similarity">
    <text evidence="1">Belongs to the universal ribosomal protein uL10 family.</text>
</comment>
<evidence type="ECO:0000255" key="1">
    <source>
        <dbReference type="HAMAP-Rule" id="MF_00362"/>
    </source>
</evidence>
<evidence type="ECO:0000305" key="2"/>
<proteinExistence type="inferred from homology"/>
<protein>
    <recommendedName>
        <fullName evidence="1">Large ribosomal subunit protein uL10</fullName>
    </recommendedName>
    <alternativeName>
        <fullName evidence="2">50S ribosomal protein L10</fullName>
    </alternativeName>
</protein>
<accession>Q1D7U5</accession>
<name>RL10_MYXXD</name>